<gene>
    <name type="primary">PCMP-E41</name>
    <name evidence="4" type="synonym">OTP80</name>
    <name type="ordered locus">At5g59200</name>
    <name type="ORF">MNC17.11</name>
</gene>
<feature type="transit peptide" description="Chloroplast" evidence="1">
    <location>
        <begin position="1"/>
        <end position="25"/>
    </location>
</feature>
<feature type="chain" id="PRO_0000363572" description="Putative pentatricopeptide repeat-containing protein At5g59200, chloroplastic" evidence="1">
    <location>
        <begin position="26"/>
        <end position="544"/>
    </location>
</feature>
<feature type="repeat" description="PPR 1">
    <location>
        <begin position="60"/>
        <end position="90"/>
    </location>
</feature>
<feature type="repeat" description="PPR 2">
    <location>
        <begin position="91"/>
        <end position="125"/>
    </location>
</feature>
<feature type="repeat" description="PPR 3">
    <location>
        <begin position="127"/>
        <end position="156"/>
    </location>
</feature>
<feature type="repeat" description="PPR 4">
    <location>
        <begin position="157"/>
        <end position="187"/>
    </location>
</feature>
<feature type="repeat" description="PPR 5">
    <location>
        <begin position="188"/>
        <end position="218"/>
    </location>
</feature>
<feature type="repeat" description="PPR 6">
    <location>
        <begin position="219"/>
        <end position="253"/>
    </location>
</feature>
<feature type="repeat" description="PPR 7">
    <location>
        <begin position="254"/>
        <end position="288"/>
    </location>
</feature>
<feature type="repeat" description="PPR 8">
    <location>
        <begin position="289"/>
        <end position="319"/>
    </location>
</feature>
<feature type="repeat" description="PPR 9">
    <location>
        <begin position="320"/>
        <end position="354"/>
    </location>
</feature>
<feature type="repeat" description="PPR 10">
    <location>
        <begin position="355"/>
        <end position="385"/>
    </location>
</feature>
<feature type="repeat" description="PPR 11">
    <location>
        <begin position="391"/>
        <end position="421"/>
    </location>
</feature>
<feature type="region of interest" description="Disordered" evidence="2">
    <location>
        <begin position="1"/>
        <end position="21"/>
    </location>
</feature>
<feature type="region of interest" description="Type E motif">
    <location>
        <begin position="426"/>
        <end position="501"/>
    </location>
</feature>
<feature type="region of interest" description="Type E(+) motif">
    <location>
        <begin position="502"/>
        <end position="532"/>
    </location>
</feature>
<name>PP435_ARATH</name>
<dbReference type="EMBL" id="AB016890">
    <property type="protein sequence ID" value="BAB09765.1"/>
    <property type="molecule type" value="Genomic_DNA"/>
</dbReference>
<dbReference type="EMBL" id="CP002688">
    <property type="protein sequence ID" value="AED97156.1"/>
    <property type="molecule type" value="Genomic_DNA"/>
</dbReference>
<dbReference type="RefSeq" id="NP_200728.2">
    <property type="nucleotide sequence ID" value="NM_125310.3"/>
</dbReference>
<dbReference type="SMR" id="Q9FIF7"/>
<dbReference type="FunCoup" id="Q9FIF7">
    <property type="interactions" value="1"/>
</dbReference>
<dbReference type="STRING" id="3702.Q9FIF7"/>
<dbReference type="PaxDb" id="3702-AT5G59200.1"/>
<dbReference type="ProteomicsDB" id="249316"/>
<dbReference type="EnsemblPlants" id="AT5G59200.1">
    <property type="protein sequence ID" value="AT5G59200.1"/>
    <property type="gene ID" value="AT5G59200"/>
</dbReference>
<dbReference type="GeneID" id="836038"/>
<dbReference type="Gramene" id="AT5G59200.1">
    <property type="protein sequence ID" value="AT5G59200.1"/>
    <property type="gene ID" value="AT5G59200"/>
</dbReference>
<dbReference type="KEGG" id="ath:AT5G59200"/>
<dbReference type="Araport" id="AT5G59200"/>
<dbReference type="TAIR" id="AT5G59200">
    <property type="gene designation" value="OTP80"/>
</dbReference>
<dbReference type="eggNOG" id="KOG4197">
    <property type="taxonomic scope" value="Eukaryota"/>
</dbReference>
<dbReference type="HOGENOM" id="CLU_002706_0_1_1"/>
<dbReference type="InParanoid" id="Q9FIF7"/>
<dbReference type="OMA" id="VTTYNSM"/>
<dbReference type="PhylomeDB" id="Q9FIF7"/>
<dbReference type="PRO" id="PR:Q9FIF7"/>
<dbReference type="Proteomes" id="UP000006548">
    <property type="component" value="Chromosome 5"/>
</dbReference>
<dbReference type="ExpressionAtlas" id="Q9FIF7">
    <property type="expression patterns" value="baseline and differential"/>
</dbReference>
<dbReference type="GO" id="GO:0009507">
    <property type="term" value="C:chloroplast"/>
    <property type="evidence" value="ECO:0000314"/>
    <property type="project" value="UniProtKB"/>
</dbReference>
<dbReference type="GO" id="GO:0003723">
    <property type="term" value="F:RNA binding"/>
    <property type="evidence" value="ECO:0007669"/>
    <property type="project" value="InterPro"/>
</dbReference>
<dbReference type="GO" id="GO:1900865">
    <property type="term" value="P:chloroplast RNA modification"/>
    <property type="evidence" value="ECO:0000315"/>
    <property type="project" value="UniProtKB"/>
</dbReference>
<dbReference type="GO" id="GO:0031425">
    <property type="term" value="P:chloroplast RNA processing"/>
    <property type="evidence" value="ECO:0000315"/>
    <property type="project" value="TAIR"/>
</dbReference>
<dbReference type="GO" id="GO:0006397">
    <property type="term" value="P:mRNA processing"/>
    <property type="evidence" value="ECO:0007669"/>
    <property type="project" value="UniProtKB-KW"/>
</dbReference>
<dbReference type="FunFam" id="1.25.40.10:FF:001050">
    <property type="entry name" value="Pentatricopeptide repeat-containing protein At2g33760"/>
    <property type="match status" value="1"/>
</dbReference>
<dbReference type="FunFam" id="1.25.40.10:FF:000231">
    <property type="entry name" value="Pentatricopeptide repeat-containing protein chloroplastic"/>
    <property type="match status" value="1"/>
</dbReference>
<dbReference type="FunFam" id="1.25.40.10:FF:000939">
    <property type="entry name" value="Pentatricopeptide repeat-containing protein ELI1, chloroplastic"/>
    <property type="match status" value="1"/>
</dbReference>
<dbReference type="FunFam" id="1.25.40.10:FF:001470">
    <property type="entry name" value="Putative pentatricopeptide repeat-containing protein At5g59200, chloroplastic"/>
    <property type="match status" value="1"/>
</dbReference>
<dbReference type="Gene3D" id="1.25.40.10">
    <property type="entry name" value="Tetratricopeptide repeat domain"/>
    <property type="match status" value="4"/>
</dbReference>
<dbReference type="InterPro" id="IPR046848">
    <property type="entry name" value="E_motif"/>
</dbReference>
<dbReference type="InterPro" id="IPR002885">
    <property type="entry name" value="Pentatricopeptide_rpt"/>
</dbReference>
<dbReference type="InterPro" id="IPR046960">
    <property type="entry name" value="PPR_At4g14850-like_plant"/>
</dbReference>
<dbReference type="InterPro" id="IPR011990">
    <property type="entry name" value="TPR-like_helical_dom_sf"/>
</dbReference>
<dbReference type="NCBIfam" id="TIGR00756">
    <property type="entry name" value="PPR"/>
    <property type="match status" value="4"/>
</dbReference>
<dbReference type="PANTHER" id="PTHR47926">
    <property type="entry name" value="PENTATRICOPEPTIDE REPEAT-CONTAINING PROTEIN"/>
    <property type="match status" value="1"/>
</dbReference>
<dbReference type="PANTHER" id="PTHR47926:SF456">
    <property type="entry name" value="PENTATRICOPEPTIDE REPEAT-CONTAINING PROTEIN ELI1, CHLOROPLASTIC"/>
    <property type="match status" value="1"/>
</dbReference>
<dbReference type="Pfam" id="PF20431">
    <property type="entry name" value="E_motif"/>
    <property type="match status" value="1"/>
</dbReference>
<dbReference type="Pfam" id="PF01535">
    <property type="entry name" value="PPR"/>
    <property type="match status" value="2"/>
</dbReference>
<dbReference type="Pfam" id="PF13041">
    <property type="entry name" value="PPR_2"/>
    <property type="match status" value="3"/>
</dbReference>
<dbReference type="PROSITE" id="PS51375">
    <property type="entry name" value="PPR"/>
    <property type="match status" value="11"/>
</dbReference>
<proteinExistence type="inferred from homology"/>
<evidence type="ECO:0000255" key="1"/>
<evidence type="ECO:0000256" key="2">
    <source>
        <dbReference type="SAM" id="MobiDB-lite"/>
    </source>
</evidence>
<evidence type="ECO:0000269" key="3">
    <source>
    </source>
</evidence>
<evidence type="ECO:0000303" key="4">
    <source>
    </source>
</evidence>
<evidence type="ECO:0000305" key="5"/>
<sequence length="544" mass="61356">MISSLAAITGGPSTFRRDPDSNTLRLSRRKTLISVLRSCKNIAHVPSIHAKIIRTFHDQDAFVVFELIRVCSTLDSVDYAYDVFSYVSNPNVYLYTAMIDGFVSSGRSADGVSLYHRMIHNSVLPDNYVITSVLKACDLKVCREIHAQVLKLGFGSSRSVGLKMMEIYGKSGELVNAKKMFDEMPDRDHVAATVMINCYSECGFIKEALELFQDVKIKDTVCWTAMIDGLVRNKEMNKALELFREMQMENVSANEFTAVCVLSACSDLGALELGRWVHSFVENQRMELSNFVGNALINMYSRCGDINEARRVFRVMRDKDVISYNTMISGLAMHGASVEAINEFRDMVNRGFRPNQVTLVALLNACSHGGLLDIGLEVFNSMKRVFNVEPQIEHYGCIVDLLGRVGRLEEAYRFIENIPIEPDHIMLGTLLSACKIHGNMELGEKIAKRLFESENPDSGTYVLLSNLYASSGKWKESTEIRESMRDSGIEKEPGCSTIEVDNQIHEFLVGDIAHPHKEAIYQRLQELNRILRFKENQIDIIMGF</sequence>
<accession>Q9FIF7</accession>
<organism>
    <name type="scientific">Arabidopsis thaliana</name>
    <name type="common">Mouse-ear cress</name>
    <dbReference type="NCBI Taxonomy" id="3702"/>
    <lineage>
        <taxon>Eukaryota</taxon>
        <taxon>Viridiplantae</taxon>
        <taxon>Streptophyta</taxon>
        <taxon>Embryophyta</taxon>
        <taxon>Tracheophyta</taxon>
        <taxon>Spermatophyta</taxon>
        <taxon>Magnoliopsida</taxon>
        <taxon>eudicotyledons</taxon>
        <taxon>Gunneridae</taxon>
        <taxon>Pentapetalae</taxon>
        <taxon>rosids</taxon>
        <taxon>malvids</taxon>
        <taxon>Brassicales</taxon>
        <taxon>Brassicaceae</taxon>
        <taxon>Camelineae</taxon>
        <taxon>Arabidopsis</taxon>
    </lineage>
</organism>
<reference key="1">
    <citation type="journal article" date="1998" name="DNA Res.">
        <title>Structural analysis of Arabidopsis thaliana chromosome 5. VIII. Sequence features of the regions of 1,081,958 bp covered by seventeen physically assigned P1 and TAC clones.</title>
        <authorList>
            <person name="Asamizu E."/>
            <person name="Sato S."/>
            <person name="Kaneko T."/>
            <person name="Nakamura Y."/>
            <person name="Kotani H."/>
            <person name="Miyajima N."/>
            <person name="Tabata S."/>
        </authorList>
    </citation>
    <scope>NUCLEOTIDE SEQUENCE [LARGE SCALE GENOMIC DNA]</scope>
    <source>
        <strain>cv. Columbia</strain>
    </source>
</reference>
<reference key="2">
    <citation type="journal article" date="2017" name="Plant J.">
        <title>Araport11: a complete reannotation of the Arabidopsis thaliana reference genome.</title>
        <authorList>
            <person name="Cheng C.Y."/>
            <person name="Krishnakumar V."/>
            <person name="Chan A.P."/>
            <person name="Thibaud-Nissen F."/>
            <person name="Schobel S."/>
            <person name="Town C.D."/>
        </authorList>
    </citation>
    <scope>GENOME REANNOTATION</scope>
    <source>
        <strain>cv. Columbia</strain>
    </source>
</reference>
<reference key="3">
    <citation type="journal article" date="2000" name="Plant Mol. Biol.">
        <title>In Arabidopsis thaliana, 1% of the genome codes for a novel protein family unique to plants.</title>
        <authorList>
            <person name="Aubourg S."/>
            <person name="Boudet N."/>
            <person name="Kreis M."/>
            <person name="Lecharny A."/>
        </authorList>
    </citation>
    <scope>GENE FAMILY</scope>
</reference>
<reference key="4">
    <citation type="journal article" date="2004" name="Plant Cell">
        <title>Genome-wide analysis of Arabidopsis pentatricopeptide repeat proteins reveals their essential role in organelle biogenesis.</title>
        <authorList>
            <person name="Lurin C."/>
            <person name="Andres C."/>
            <person name="Aubourg S."/>
            <person name="Bellaoui M."/>
            <person name="Bitton F."/>
            <person name="Bruyere C."/>
            <person name="Caboche M."/>
            <person name="Debast C."/>
            <person name="Gualberto J."/>
            <person name="Hoffmann B."/>
            <person name="Lecharny A."/>
            <person name="Le Ret M."/>
            <person name="Martin-Magniette M.-L."/>
            <person name="Mireau H."/>
            <person name="Peeters N."/>
            <person name="Renou J.-P."/>
            <person name="Szurek B."/>
            <person name="Taconnat L."/>
            <person name="Small I."/>
        </authorList>
    </citation>
    <scope>GENE FAMILY</scope>
</reference>
<reference key="5">
    <citation type="journal article" date="2009" name="Plant Cell">
        <title>A study of new Arabidopsis chloroplast RNA editing mutants reveals general features of editing factors and their target sites.</title>
        <authorList>
            <person name="Hammani K."/>
            <person name="Okuda K."/>
            <person name="Tanz S.K."/>
            <person name="Chateigner-Boutin A.L."/>
            <person name="Shikanai T."/>
            <person name="Small I."/>
        </authorList>
    </citation>
    <scope>FUNCTION</scope>
    <scope>SUBCELLULAR LOCATION</scope>
    <scope>DISRUPTION PHENOTYPE</scope>
</reference>
<protein>
    <recommendedName>
        <fullName>Putative pentatricopeptide repeat-containing protein At5g59200, chloroplastic</fullName>
    </recommendedName>
    <alternativeName>
        <fullName evidence="4">Protein ORGANELLE TRANSCRIPT PROCESSING 80</fullName>
    </alternativeName>
</protein>
<comment type="function">
    <text evidence="3">Involved in RNA editing event in chloroplasts. Required for the editing of a single site in rpl23 transcript.</text>
</comment>
<comment type="subcellular location">
    <subcellularLocation>
        <location evidence="3">Plastid</location>
        <location evidence="3">Chloroplast</location>
    </subcellularLocation>
</comment>
<comment type="disruption phenotype">
    <text evidence="3">No visible phenotype under normal growth conditions.</text>
</comment>
<comment type="similarity">
    <text evidence="5">Belongs to the PPR family. PCMP-E subfamily.</text>
</comment>
<comment type="online information" name="Pentatricopeptide repeat proteins">
    <link uri="https://ppr.plantenergy.uwa.edu.au"/>
</comment>
<keyword id="KW-0150">Chloroplast</keyword>
<keyword id="KW-0507">mRNA processing</keyword>
<keyword id="KW-0934">Plastid</keyword>
<keyword id="KW-1185">Reference proteome</keyword>
<keyword id="KW-0677">Repeat</keyword>
<keyword id="KW-0809">Transit peptide</keyword>